<comment type="function">
    <text evidence="1">Catalyzes the conversion of urocanate to 4-imidazolone-5-propionate.</text>
</comment>
<comment type="catalytic activity">
    <reaction evidence="1">
        <text>4-imidazolone-5-propanoate = trans-urocanate + H2O</text>
        <dbReference type="Rhea" id="RHEA:13101"/>
        <dbReference type="ChEBI" id="CHEBI:15377"/>
        <dbReference type="ChEBI" id="CHEBI:17771"/>
        <dbReference type="ChEBI" id="CHEBI:77893"/>
        <dbReference type="EC" id="4.2.1.49"/>
    </reaction>
</comment>
<comment type="cofactor">
    <cofactor evidence="1">
        <name>NAD(+)</name>
        <dbReference type="ChEBI" id="CHEBI:57540"/>
    </cofactor>
    <text evidence="1">Binds 1 NAD(+) per subunit.</text>
</comment>
<comment type="pathway">
    <text evidence="1">Amino-acid degradation; L-histidine degradation into L-glutamate; N-formimidoyl-L-glutamate from L-histidine: step 2/3.</text>
</comment>
<comment type="subcellular location">
    <subcellularLocation>
        <location evidence="1">Cytoplasm</location>
    </subcellularLocation>
</comment>
<comment type="similarity">
    <text evidence="1">Belongs to the urocanase family.</text>
</comment>
<keyword id="KW-0963">Cytoplasm</keyword>
<keyword id="KW-0369">Histidine metabolism</keyword>
<keyword id="KW-0456">Lyase</keyword>
<keyword id="KW-0520">NAD</keyword>
<dbReference type="EC" id="4.2.1.49" evidence="1"/>
<dbReference type="EMBL" id="AE017355">
    <property type="protein sequence ID" value="AAT61656.1"/>
    <property type="molecule type" value="Genomic_DNA"/>
</dbReference>
<dbReference type="RefSeq" id="WP_000416707.1">
    <property type="nucleotide sequence ID" value="NC_005957.1"/>
</dbReference>
<dbReference type="RefSeq" id="YP_037726.1">
    <property type="nucleotide sequence ID" value="NC_005957.1"/>
</dbReference>
<dbReference type="SMR" id="Q6HFF0"/>
<dbReference type="GeneID" id="75086717"/>
<dbReference type="KEGG" id="btk:BT9727_3404"/>
<dbReference type="PATRIC" id="fig|281309.8.peg.3631"/>
<dbReference type="HOGENOM" id="CLU_018868_0_1_9"/>
<dbReference type="UniPathway" id="UPA00379">
    <property type="reaction ID" value="UER00550"/>
</dbReference>
<dbReference type="Proteomes" id="UP000001301">
    <property type="component" value="Chromosome"/>
</dbReference>
<dbReference type="GO" id="GO:0005737">
    <property type="term" value="C:cytoplasm"/>
    <property type="evidence" value="ECO:0007669"/>
    <property type="project" value="UniProtKB-SubCell"/>
</dbReference>
<dbReference type="GO" id="GO:0016153">
    <property type="term" value="F:urocanate hydratase activity"/>
    <property type="evidence" value="ECO:0007669"/>
    <property type="project" value="UniProtKB-UniRule"/>
</dbReference>
<dbReference type="GO" id="GO:0019556">
    <property type="term" value="P:L-histidine catabolic process to glutamate and formamide"/>
    <property type="evidence" value="ECO:0007669"/>
    <property type="project" value="UniProtKB-UniPathway"/>
</dbReference>
<dbReference type="GO" id="GO:0019557">
    <property type="term" value="P:L-histidine catabolic process to glutamate and formate"/>
    <property type="evidence" value="ECO:0007669"/>
    <property type="project" value="UniProtKB-UniPathway"/>
</dbReference>
<dbReference type="FunFam" id="3.40.50.10730:FF:000001">
    <property type="entry name" value="Urocanate hydratase"/>
    <property type="match status" value="1"/>
</dbReference>
<dbReference type="Gene3D" id="3.40.50.10730">
    <property type="entry name" value="Urocanase like domains"/>
    <property type="match status" value="1"/>
</dbReference>
<dbReference type="Gene3D" id="3.40.1770.10">
    <property type="entry name" value="Urocanase superfamily"/>
    <property type="match status" value="1"/>
</dbReference>
<dbReference type="HAMAP" id="MF_00577">
    <property type="entry name" value="HutU"/>
    <property type="match status" value="1"/>
</dbReference>
<dbReference type="InterPro" id="IPR055351">
    <property type="entry name" value="Urocanase"/>
</dbReference>
<dbReference type="InterPro" id="IPR023637">
    <property type="entry name" value="Urocanase-like"/>
</dbReference>
<dbReference type="InterPro" id="IPR035401">
    <property type="entry name" value="Urocanase_C"/>
</dbReference>
<dbReference type="InterPro" id="IPR038364">
    <property type="entry name" value="Urocanase_central_sf"/>
</dbReference>
<dbReference type="InterPro" id="IPR023636">
    <property type="entry name" value="Urocanase_CS"/>
</dbReference>
<dbReference type="InterPro" id="IPR035400">
    <property type="entry name" value="Urocanase_N"/>
</dbReference>
<dbReference type="InterPro" id="IPR035085">
    <property type="entry name" value="Urocanase_Rossmann-like"/>
</dbReference>
<dbReference type="InterPro" id="IPR036190">
    <property type="entry name" value="Urocanase_sf"/>
</dbReference>
<dbReference type="NCBIfam" id="TIGR01228">
    <property type="entry name" value="hutU"/>
    <property type="match status" value="1"/>
</dbReference>
<dbReference type="NCBIfam" id="NF003820">
    <property type="entry name" value="PRK05414.1"/>
    <property type="match status" value="1"/>
</dbReference>
<dbReference type="PANTHER" id="PTHR12216">
    <property type="entry name" value="UROCANATE HYDRATASE"/>
    <property type="match status" value="1"/>
</dbReference>
<dbReference type="PANTHER" id="PTHR12216:SF4">
    <property type="entry name" value="UROCANATE HYDRATASE"/>
    <property type="match status" value="1"/>
</dbReference>
<dbReference type="Pfam" id="PF01175">
    <property type="entry name" value="Urocanase"/>
    <property type="match status" value="1"/>
</dbReference>
<dbReference type="Pfam" id="PF17392">
    <property type="entry name" value="Urocanase_C"/>
    <property type="match status" value="1"/>
</dbReference>
<dbReference type="Pfam" id="PF17391">
    <property type="entry name" value="Urocanase_N"/>
    <property type="match status" value="1"/>
</dbReference>
<dbReference type="PIRSF" id="PIRSF001423">
    <property type="entry name" value="Urocanate_hydrat"/>
    <property type="match status" value="1"/>
</dbReference>
<dbReference type="SUPFAM" id="SSF111326">
    <property type="entry name" value="Urocanase"/>
    <property type="match status" value="1"/>
</dbReference>
<dbReference type="PROSITE" id="PS01233">
    <property type="entry name" value="UROCANASE"/>
    <property type="match status" value="1"/>
</dbReference>
<proteinExistence type="inferred from homology"/>
<accession>Q6HFF0</accession>
<feature type="chain" id="PRO_1000025119" description="Urocanate hydratase">
    <location>
        <begin position="1"/>
        <end position="552"/>
    </location>
</feature>
<feature type="active site" evidence="1">
    <location>
        <position position="407"/>
    </location>
</feature>
<feature type="binding site" evidence="1">
    <location>
        <begin position="49"/>
        <end position="50"/>
    </location>
    <ligand>
        <name>NAD(+)</name>
        <dbReference type="ChEBI" id="CHEBI:57540"/>
    </ligand>
</feature>
<feature type="binding site" evidence="1">
    <location>
        <position position="127"/>
    </location>
    <ligand>
        <name>NAD(+)</name>
        <dbReference type="ChEBI" id="CHEBI:57540"/>
    </ligand>
</feature>
<feature type="binding site" evidence="1">
    <location>
        <begin position="173"/>
        <end position="175"/>
    </location>
    <ligand>
        <name>NAD(+)</name>
        <dbReference type="ChEBI" id="CHEBI:57540"/>
    </ligand>
</feature>
<feature type="binding site" evidence="1">
    <location>
        <position position="193"/>
    </location>
    <ligand>
        <name>NAD(+)</name>
        <dbReference type="ChEBI" id="CHEBI:57540"/>
    </ligand>
</feature>
<feature type="binding site" evidence="1">
    <location>
        <begin position="239"/>
        <end position="240"/>
    </location>
    <ligand>
        <name>NAD(+)</name>
        <dbReference type="ChEBI" id="CHEBI:57540"/>
    </ligand>
</feature>
<feature type="binding site" evidence="1">
    <location>
        <begin position="260"/>
        <end position="264"/>
    </location>
    <ligand>
        <name>NAD(+)</name>
        <dbReference type="ChEBI" id="CHEBI:57540"/>
    </ligand>
</feature>
<feature type="binding site" evidence="1">
    <location>
        <begin position="270"/>
        <end position="271"/>
    </location>
    <ligand>
        <name>NAD(+)</name>
        <dbReference type="ChEBI" id="CHEBI:57540"/>
    </ligand>
</feature>
<feature type="binding site" evidence="1">
    <location>
        <position position="319"/>
    </location>
    <ligand>
        <name>NAD(+)</name>
        <dbReference type="ChEBI" id="CHEBI:57540"/>
    </ligand>
</feature>
<feature type="binding site" evidence="1">
    <location>
        <position position="489"/>
    </location>
    <ligand>
        <name>NAD(+)</name>
        <dbReference type="ChEBI" id="CHEBI:57540"/>
    </ligand>
</feature>
<evidence type="ECO:0000255" key="1">
    <source>
        <dbReference type="HAMAP-Rule" id="MF_00577"/>
    </source>
</evidence>
<name>HUTU_BACHK</name>
<gene>
    <name evidence="1" type="primary">hutU</name>
    <name type="ordered locus">BT9727_3404</name>
</gene>
<sequence length="552" mass="60750">MEKVKQTIRAPRGTELQTKGWVQEAALRMLMNNLDPEVAEKPEELVVYGGIGRAARNWESYNAIVDSLKTLESDETLLVQSGKPVAIFKSHEDAPRVLLANSNLVPKWANWDHFRELEKKGLMMYGQMTAGSWIYIGTQGILQGTYETFGEAARQHFGGSLKGTLTLTAGLGGMGGAQPLAVTMNGGVVIAIDVDKRSIDRRIEKRYCDMYTESLEEALTVANEYKEKKEPISIGLLGNAAEILPELVKRNITPDLVTDQTSAHDPLNGYIPVGYTLEEAAKLREEDPERYVQLSKESMTKHVEAMLTMQAKGAITFDYGNNIRQVAFDEGLKNAFDFPGFVPAFIRPLFCEGKGPFRWVALSGDPEDIYKTDEVILREFADNEHLCNWIRMARQQVEFQGLPSRICWLGYGERAKFGRIINEMVANGELSAPIVIGRDHLDCGSVASPNRETEAMKDGSDAVADWPILNALINSVNGASWVSVHHGGGVGMGYSLHAGMVIVADGTEAAAKRIERVLTSDPGMGVVRHVDAGYDLAVETAKEKGVNIPMMK</sequence>
<protein>
    <recommendedName>
        <fullName evidence="1">Urocanate hydratase</fullName>
        <shortName evidence="1">Urocanase</shortName>
        <ecNumber evidence="1">4.2.1.49</ecNumber>
    </recommendedName>
    <alternativeName>
        <fullName evidence="1">Imidazolonepropionate hydrolase</fullName>
    </alternativeName>
</protein>
<reference key="1">
    <citation type="journal article" date="2006" name="J. Bacteriol.">
        <title>Pathogenomic sequence analysis of Bacillus cereus and Bacillus thuringiensis isolates closely related to Bacillus anthracis.</title>
        <authorList>
            <person name="Han C.S."/>
            <person name="Xie G."/>
            <person name="Challacombe J.F."/>
            <person name="Altherr M.R."/>
            <person name="Bhotika S.S."/>
            <person name="Bruce D."/>
            <person name="Campbell C.S."/>
            <person name="Campbell M.L."/>
            <person name="Chen J."/>
            <person name="Chertkov O."/>
            <person name="Cleland C."/>
            <person name="Dimitrijevic M."/>
            <person name="Doggett N.A."/>
            <person name="Fawcett J.J."/>
            <person name="Glavina T."/>
            <person name="Goodwin L.A."/>
            <person name="Hill K.K."/>
            <person name="Hitchcock P."/>
            <person name="Jackson P.J."/>
            <person name="Keim P."/>
            <person name="Kewalramani A.R."/>
            <person name="Longmire J."/>
            <person name="Lucas S."/>
            <person name="Malfatti S."/>
            <person name="McMurry K."/>
            <person name="Meincke L.J."/>
            <person name="Misra M."/>
            <person name="Moseman B.L."/>
            <person name="Mundt M."/>
            <person name="Munk A.C."/>
            <person name="Okinaka R.T."/>
            <person name="Parson-Quintana B."/>
            <person name="Reilly L.P."/>
            <person name="Richardson P."/>
            <person name="Robinson D.L."/>
            <person name="Rubin E."/>
            <person name="Saunders E."/>
            <person name="Tapia R."/>
            <person name="Tesmer J.G."/>
            <person name="Thayer N."/>
            <person name="Thompson L.S."/>
            <person name="Tice H."/>
            <person name="Ticknor L.O."/>
            <person name="Wills P.L."/>
            <person name="Brettin T.S."/>
            <person name="Gilna P."/>
        </authorList>
    </citation>
    <scope>NUCLEOTIDE SEQUENCE [LARGE SCALE GENOMIC DNA]</scope>
    <source>
        <strain>97-27</strain>
    </source>
</reference>
<organism>
    <name type="scientific">Bacillus thuringiensis subsp. konkukian (strain 97-27)</name>
    <dbReference type="NCBI Taxonomy" id="281309"/>
    <lineage>
        <taxon>Bacteria</taxon>
        <taxon>Bacillati</taxon>
        <taxon>Bacillota</taxon>
        <taxon>Bacilli</taxon>
        <taxon>Bacillales</taxon>
        <taxon>Bacillaceae</taxon>
        <taxon>Bacillus</taxon>
        <taxon>Bacillus cereus group</taxon>
    </lineage>
</organism>